<organism>
    <name type="scientific">Haemophilus influenzae (strain PittEE)</name>
    <dbReference type="NCBI Taxonomy" id="374930"/>
    <lineage>
        <taxon>Bacteria</taxon>
        <taxon>Pseudomonadati</taxon>
        <taxon>Pseudomonadota</taxon>
        <taxon>Gammaproteobacteria</taxon>
        <taxon>Pasteurellales</taxon>
        <taxon>Pasteurellaceae</taxon>
        <taxon>Haemophilus</taxon>
    </lineage>
</organism>
<dbReference type="EMBL" id="CP000671">
    <property type="protein sequence ID" value="ABQ98524.1"/>
    <property type="molecule type" value="Genomic_DNA"/>
</dbReference>
<dbReference type="SMR" id="A5UCM3"/>
<dbReference type="KEGG" id="hip:CGSHiEE_05815"/>
<dbReference type="HOGENOM" id="CLU_137946_0_0_6"/>
<dbReference type="GO" id="GO:0022625">
    <property type="term" value="C:cytosolic large ribosomal subunit"/>
    <property type="evidence" value="ECO:0007669"/>
    <property type="project" value="TreeGrafter"/>
</dbReference>
<dbReference type="GO" id="GO:0008097">
    <property type="term" value="F:5S rRNA binding"/>
    <property type="evidence" value="ECO:0007669"/>
    <property type="project" value="InterPro"/>
</dbReference>
<dbReference type="GO" id="GO:0003735">
    <property type="term" value="F:structural constituent of ribosome"/>
    <property type="evidence" value="ECO:0007669"/>
    <property type="project" value="InterPro"/>
</dbReference>
<dbReference type="GO" id="GO:0006412">
    <property type="term" value="P:translation"/>
    <property type="evidence" value="ECO:0007669"/>
    <property type="project" value="UniProtKB-UniRule"/>
</dbReference>
<dbReference type="CDD" id="cd00495">
    <property type="entry name" value="Ribosomal_L25_TL5_CTC"/>
    <property type="match status" value="1"/>
</dbReference>
<dbReference type="FunFam" id="2.40.240.10:FF:000002">
    <property type="entry name" value="50S ribosomal protein L25"/>
    <property type="match status" value="1"/>
</dbReference>
<dbReference type="Gene3D" id="2.40.240.10">
    <property type="entry name" value="Ribosomal Protein L25, Chain P"/>
    <property type="match status" value="1"/>
</dbReference>
<dbReference type="HAMAP" id="MF_01336">
    <property type="entry name" value="Ribosomal_bL25"/>
    <property type="match status" value="1"/>
</dbReference>
<dbReference type="InterPro" id="IPR020056">
    <property type="entry name" value="Rbsml_bL25/Gln-tRNA_synth_N"/>
</dbReference>
<dbReference type="InterPro" id="IPR011035">
    <property type="entry name" value="Ribosomal_bL25/Gln-tRNA_synth"/>
</dbReference>
<dbReference type="InterPro" id="IPR020055">
    <property type="entry name" value="Ribosomal_bL25_short"/>
</dbReference>
<dbReference type="InterPro" id="IPR029751">
    <property type="entry name" value="Ribosomal_L25_dom"/>
</dbReference>
<dbReference type="InterPro" id="IPR020930">
    <property type="entry name" value="Ribosomal_uL5_bac-type"/>
</dbReference>
<dbReference type="NCBIfam" id="NF004612">
    <property type="entry name" value="PRK05943.1"/>
    <property type="match status" value="1"/>
</dbReference>
<dbReference type="PANTHER" id="PTHR33284">
    <property type="entry name" value="RIBOSOMAL PROTEIN L25/GLN-TRNA SYNTHETASE, ANTI-CODON-BINDING DOMAIN-CONTAINING PROTEIN"/>
    <property type="match status" value="1"/>
</dbReference>
<dbReference type="PANTHER" id="PTHR33284:SF1">
    <property type="entry name" value="RIBOSOMAL PROTEIN L25_GLN-TRNA SYNTHETASE, ANTI-CODON-BINDING DOMAIN-CONTAINING PROTEIN"/>
    <property type="match status" value="1"/>
</dbReference>
<dbReference type="Pfam" id="PF01386">
    <property type="entry name" value="Ribosomal_L25p"/>
    <property type="match status" value="1"/>
</dbReference>
<dbReference type="SUPFAM" id="SSF50715">
    <property type="entry name" value="Ribosomal protein L25-like"/>
    <property type="match status" value="1"/>
</dbReference>
<comment type="function">
    <text evidence="1">This is one of the proteins that binds to the 5S RNA in the ribosome where it forms part of the central protuberance.</text>
</comment>
<comment type="subunit">
    <text evidence="1">Part of the 50S ribosomal subunit; part of the 5S rRNA/L5/L18/L25 subcomplex. Contacts the 5S rRNA. Binds to the 5S rRNA independently of L5 and L18.</text>
</comment>
<comment type="similarity">
    <text evidence="1">Belongs to the bacterial ribosomal protein bL25 family.</text>
</comment>
<reference key="1">
    <citation type="journal article" date="2007" name="Genome Biol.">
        <title>Characterization and modeling of the Haemophilus influenzae core and supragenomes based on the complete genomic sequences of Rd and 12 clinical nontypeable strains.</title>
        <authorList>
            <person name="Hogg J.S."/>
            <person name="Hu F.Z."/>
            <person name="Janto B."/>
            <person name="Boissy R."/>
            <person name="Hayes J."/>
            <person name="Keefe R."/>
            <person name="Post J.C."/>
            <person name="Ehrlich G.D."/>
        </authorList>
    </citation>
    <scope>NUCLEOTIDE SEQUENCE [LARGE SCALE GENOMIC DNA]</scope>
    <source>
        <strain>PittEE</strain>
    </source>
</reference>
<evidence type="ECO:0000255" key="1">
    <source>
        <dbReference type="HAMAP-Rule" id="MF_01336"/>
    </source>
</evidence>
<evidence type="ECO:0000305" key="2"/>
<gene>
    <name evidence="1" type="primary">rplY</name>
    <name type="ordered locus">CGSHiEE_05815</name>
</gene>
<proteinExistence type="inferred from homology"/>
<keyword id="KW-0687">Ribonucleoprotein</keyword>
<keyword id="KW-0689">Ribosomal protein</keyword>
<keyword id="KW-0694">RNA-binding</keyword>
<keyword id="KW-0699">rRNA-binding</keyword>
<sequence>MAFKFNAEVRTAQGKGASRRLRNNGQIPAIVYGGSEEPVSIILNHDELNNAQAHESFYSEVITLVIGGKEVAVKVQAMQRHPFKPKLVHIDFKRA</sequence>
<accession>A5UCM3</accession>
<feature type="chain" id="PRO_1000052957" description="Large ribosomal subunit protein bL25">
    <location>
        <begin position="1"/>
        <end position="95"/>
    </location>
</feature>
<name>RL25_HAEIE</name>
<protein>
    <recommendedName>
        <fullName evidence="1">Large ribosomal subunit protein bL25</fullName>
    </recommendedName>
    <alternativeName>
        <fullName evidence="2">50S ribosomal protein L25</fullName>
    </alternativeName>
</protein>